<reference key="1">
    <citation type="journal article" date="2003" name="Plant Physiol.">
        <title>The ARG1-LIKE2 gene of Arabidopsis functions in a gravity signal transduction pathway that is genetically distinct from the PGM pathway.</title>
        <authorList>
            <person name="Guan C."/>
            <person name="Rosen E.S."/>
            <person name="Boonsirichai K."/>
            <person name="Poff K.L."/>
            <person name="Masson P.H."/>
        </authorList>
    </citation>
    <scope>NUCLEOTIDE SEQUENCE [MRNA]</scope>
    <scope>FUNCTION</scope>
    <scope>TISSUE SPECIFICITY</scope>
    <source>
        <strain>cv. Wassilewskija</strain>
    </source>
</reference>
<reference key="2">
    <citation type="journal article" date="2000" name="Nature">
        <title>Sequence and analysis of chromosome 1 of the plant Arabidopsis thaliana.</title>
        <authorList>
            <person name="Theologis A."/>
            <person name="Ecker J.R."/>
            <person name="Palm C.J."/>
            <person name="Federspiel N.A."/>
            <person name="Kaul S."/>
            <person name="White O."/>
            <person name="Alonso J."/>
            <person name="Altafi H."/>
            <person name="Araujo R."/>
            <person name="Bowman C.L."/>
            <person name="Brooks S.Y."/>
            <person name="Buehler E."/>
            <person name="Chan A."/>
            <person name="Chao Q."/>
            <person name="Chen H."/>
            <person name="Cheuk R.F."/>
            <person name="Chin C.W."/>
            <person name="Chung M.K."/>
            <person name="Conn L."/>
            <person name="Conway A.B."/>
            <person name="Conway A.R."/>
            <person name="Creasy T.H."/>
            <person name="Dewar K."/>
            <person name="Dunn P."/>
            <person name="Etgu P."/>
            <person name="Feldblyum T.V."/>
            <person name="Feng J.-D."/>
            <person name="Fong B."/>
            <person name="Fujii C.Y."/>
            <person name="Gill J.E."/>
            <person name="Goldsmith A.D."/>
            <person name="Haas B."/>
            <person name="Hansen N.F."/>
            <person name="Hughes B."/>
            <person name="Huizar L."/>
            <person name="Hunter J.L."/>
            <person name="Jenkins J."/>
            <person name="Johnson-Hopson C."/>
            <person name="Khan S."/>
            <person name="Khaykin E."/>
            <person name="Kim C.J."/>
            <person name="Koo H.L."/>
            <person name="Kremenetskaia I."/>
            <person name="Kurtz D.B."/>
            <person name="Kwan A."/>
            <person name="Lam B."/>
            <person name="Langin-Hooper S."/>
            <person name="Lee A."/>
            <person name="Lee J.M."/>
            <person name="Lenz C.A."/>
            <person name="Li J.H."/>
            <person name="Li Y.-P."/>
            <person name="Lin X."/>
            <person name="Liu S.X."/>
            <person name="Liu Z.A."/>
            <person name="Luros J.S."/>
            <person name="Maiti R."/>
            <person name="Marziali A."/>
            <person name="Militscher J."/>
            <person name="Miranda M."/>
            <person name="Nguyen M."/>
            <person name="Nierman W.C."/>
            <person name="Osborne B.I."/>
            <person name="Pai G."/>
            <person name="Peterson J."/>
            <person name="Pham P.K."/>
            <person name="Rizzo M."/>
            <person name="Rooney T."/>
            <person name="Rowley D."/>
            <person name="Sakano H."/>
            <person name="Salzberg S.L."/>
            <person name="Schwartz J.R."/>
            <person name="Shinn P."/>
            <person name="Southwick A.M."/>
            <person name="Sun H."/>
            <person name="Tallon L.J."/>
            <person name="Tambunga G."/>
            <person name="Toriumi M.J."/>
            <person name="Town C.D."/>
            <person name="Utterback T."/>
            <person name="Van Aken S."/>
            <person name="Vaysberg M."/>
            <person name="Vysotskaia V.S."/>
            <person name="Walker M."/>
            <person name="Wu D."/>
            <person name="Yu G."/>
            <person name="Fraser C.M."/>
            <person name="Venter J.C."/>
            <person name="Davis R.W."/>
        </authorList>
    </citation>
    <scope>NUCLEOTIDE SEQUENCE [LARGE SCALE GENOMIC DNA]</scope>
    <source>
        <strain>cv. Columbia</strain>
    </source>
</reference>
<reference key="3">
    <citation type="journal article" date="2017" name="Plant J.">
        <title>Araport11: a complete reannotation of the Arabidopsis thaliana reference genome.</title>
        <authorList>
            <person name="Cheng C.Y."/>
            <person name="Krishnakumar V."/>
            <person name="Chan A.P."/>
            <person name="Thibaud-Nissen F."/>
            <person name="Schobel S."/>
            <person name="Town C.D."/>
        </authorList>
    </citation>
    <scope>GENOME REANNOTATION</scope>
    <source>
        <strain>cv. Columbia</strain>
    </source>
</reference>
<reference key="4">
    <citation type="journal article" date="2003" name="Science">
        <title>Empirical analysis of transcriptional activity in the Arabidopsis genome.</title>
        <authorList>
            <person name="Yamada K."/>
            <person name="Lim J."/>
            <person name="Dale J.M."/>
            <person name="Chen H."/>
            <person name="Shinn P."/>
            <person name="Palm C.J."/>
            <person name="Southwick A.M."/>
            <person name="Wu H.C."/>
            <person name="Kim C.J."/>
            <person name="Nguyen M."/>
            <person name="Pham P.K."/>
            <person name="Cheuk R.F."/>
            <person name="Karlin-Newmann G."/>
            <person name="Liu S.X."/>
            <person name="Lam B."/>
            <person name="Sakano H."/>
            <person name="Wu T."/>
            <person name="Yu G."/>
            <person name="Miranda M."/>
            <person name="Quach H.L."/>
            <person name="Tripp M."/>
            <person name="Chang C.H."/>
            <person name="Lee J.M."/>
            <person name="Toriumi M.J."/>
            <person name="Chan M.M."/>
            <person name="Tang C.C."/>
            <person name="Onodera C.S."/>
            <person name="Deng J.M."/>
            <person name="Akiyama K."/>
            <person name="Ansari Y."/>
            <person name="Arakawa T."/>
            <person name="Banh J."/>
            <person name="Banno F."/>
            <person name="Bowser L."/>
            <person name="Brooks S.Y."/>
            <person name="Carninci P."/>
            <person name="Chao Q."/>
            <person name="Choy N."/>
            <person name="Enju A."/>
            <person name="Goldsmith A.D."/>
            <person name="Gurjal M."/>
            <person name="Hansen N.F."/>
            <person name="Hayashizaki Y."/>
            <person name="Johnson-Hopson C."/>
            <person name="Hsuan V.W."/>
            <person name="Iida K."/>
            <person name="Karnes M."/>
            <person name="Khan S."/>
            <person name="Koesema E."/>
            <person name="Ishida J."/>
            <person name="Jiang P.X."/>
            <person name="Jones T."/>
            <person name="Kawai J."/>
            <person name="Kamiya A."/>
            <person name="Meyers C."/>
            <person name="Nakajima M."/>
            <person name="Narusaka M."/>
            <person name="Seki M."/>
            <person name="Sakurai T."/>
            <person name="Satou M."/>
            <person name="Tamse R."/>
            <person name="Vaysberg M."/>
            <person name="Wallender E.K."/>
            <person name="Wong C."/>
            <person name="Yamamura Y."/>
            <person name="Yuan S."/>
            <person name="Shinozaki K."/>
            <person name="Davis R.W."/>
            <person name="Theologis A."/>
            <person name="Ecker J.R."/>
        </authorList>
    </citation>
    <scope>NUCLEOTIDE SEQUENCE [LARGE SCALE MRNA]</scope>
    <source>
        <strain>cv. Columbia</strain>
    </source>
</reference>
<reference key="5">
    <citation type="journal article" date="2001" name="Cell Stress Chaperones">
        <title>The J-domain proteins of Arabidopsis thaliana: an unexpectedly large and diverse family of chaperones.</title>
        <authorList>
            <person name="Miernyk J.A."/>
        </authorList>
    </citation>
    <scope>GENE FAMILY</scope>
    <scope>NOMENCLATURE</scope>
</reference>
<name>DNJ16_ARATH</name>
<keyword id="KW-0143">Chaperone</keyword>
<keyword id="KW-0175">Coiled coil</keyword>
<keyword id="KW-0472">Membrane</keyword>
<keyword id="KW-1185">Reference proteome</keyword>
<sequence>MPGHRSKSEKKDADKQLRRDPYEVLGVLRNSTDQEIKSAYRKLALKYHPDKTANDPVAADMFKEVTFSYNILSDPEKRRQFDSAGFEAVEAESQELELDLSSLGAVNTVFAALFSKLGVPIKTSVSATILEEALNGRVSVDPLVLGQAVSKKVEKQCAHFYAVTISEEEVSAGLVCRVESSSKSKFKLLYFDQEANSGLSLALQEDSKRTGKITSAGMYFLGFPVYRLDHTINSMAQAKDPETAFFKKLDGFQQCEVTELKAGTHVFAVYGDNFFKNVSYTIQVLCAAAFTQEKEDLRSVEAQILTKRAELAKFETEYREVLVQFTDMTSRYAQEMQSIDELLKQRNEIHSAYTTIPLMKRSSSKNRMRKSSFKKAAAKAPAPTEQEEEEEEEEEEEEESSRQKNKKPSTCDKSETLKKKSKWFNLHLKLDKKKPC</sequence>
<accession>Q8VXV4</accession>
<accession>O48678</accession>
<evidence type="ECO:0000250" key="1"/>
<evidence type="ECO:0000255" key="2"/>
<evidence type="ECO:0000255" key="3">
    <source>
        <dbReference type="PROSITE-ProRule" id="PRU00286"/>
    </source>
</evidence>
<evidence type="ECO:0000256" key="4">
    <source>
        <dbReference type="SAM" id="MobiDB-lite"/>
    </source>
</evidence>
<evidence type="ECO:0000269" key="5">
    <source>
    </source>
</evidence>
<evidence type="ECO:0000305" key="6"/>
<protein>
    <recommendedName>
        <fullName>Chaperone protein dnaJ 16</fullName>
        <shortName>AtDjB16</shortName>
        <shortName>AtJ16</shortName>
    </recommendedName>
    <alternativeName>
        <fullName>Protein ARG1-LIKE 1</fullName>
        <shortName>AtARL1</shortName>
    </alternativeName>
</protein>
<proteinExistence type="evidence at transcript level"/>
<organism>
    <name type="scientific">Arabidopsis thaliana</name>
    <name type="common">Mouse-ear cress</name>
    <dbReference type="NCBI Taxonomy" id="3702"/>
    <lineage>
        <taxon>Eukaryota</taxon>
        <taxon>Viridiplantae</taxon>
        <taxon>Streptophyta</taxon>
        <taxon>Embryophyta</taxon>
        <taxon>Tracheophyta</taxon>
        <taxon>Spermatophyta</taxon>
        <taxon>Magnoliopsida</taxon>
        <taxon>eudicotyledons</taxon>
        <taxon>Gunneridae</taxon>
        <taxon>Pentapetalae</taxon>
        <taxon>rosids</taxon>
        <taxon>malvids</taxon>
        <taxon>Brassicales</taxon>
        <taxon>Brassicaceae</taxon>
        <taxon>Camelineae</taxon>
        <taxon>Arabidopsis</taxon>
    </lineage>
</organism>
<comment type="function">
    <text evidence="1 5">Plays a continuous role in plant development probably in the structural organization of compartments (By similarity). Seems to not be involved in gravitropism signaling pathway.</text>
</comment>
<comment type="subcellular location">
    <subcellularLocation>
        <location evidence="6">Membrane</location>
        <topology evidence="6">Peripheral membrane protein</topology>
    </subcellularLocation>
</comment>
<comment type="tissue specificity">
    <text evidence="5">Expressed constitutively in seedlings, roots, leaves, stems, flowers and siliques.</text>
</comment>
<comment type="similarity">
    <text evidence="6">Belongs to the DnaJ family. B/II subfamily.</text>
</comment>
<comment type="sequence caution" evidence="6">
    <conflict type="erroneous gene model prediction">
        <sequence resource="EMBL-CDS" id="AAC00573"/>
    </conflict>
</comment>
<feature type="chain" id="PRO_0000071084" description="Chaperone protein dnaJ 16">
    <location>
        <begin position="1"/>
        <end position="436"/>
    </location>
</feature>
<feature type="domain" description="J" evidence="3">
    <location>
        <begin position="20"/>
        <end position="85"/>
    </location>
</feature>
<feature type="region of interest" description="Disordered" evidence="4">
    <location>
        <begin position="360"/>
        <end position="416"/>
    </location>
</feature>
<feature type="coiled-coil region" evidence="2">
    <location>
        <begin position="291"/>
        <end position="348"/>
    </location>
</feature>
<feature type="compositionally biased region" description="Basic residues" evidence="4">
    <location>
        <begin position="362"/>
        <end position="377"/>
    </location>
</feature>
<feature type="compositionally biased region" description="Acidic residues" evidence="4">
    <location>
        <begin position="385"/>
        <end position="399"/>
    </location>
</feature>
<gene>
    <name type="primary">ATJ16</name>
    <name type="synonym">ARL1</name>
    <name type="synonym">B16</name>
    <name type="ordered locus">At1g24120</name>
    <name type="ORF">F3I6.4</name>
</gene>
<dbReference type="EMBL" id="AY226825">
    <property type="protein sequence ID" value="AAP49704.1"/>
    <property type="molecule type" value="mRNA"/>
</dbReference>
<dbReference type="EMBL" id="AC002396">
    <property type="protein sequence ID" value="AAC00573.1"/>
    <property type="status" value="ALT_SEQ"/>
    <property type="molecule type" value="Genomic_DNA"/>
</dbReference>
<dbReference type="EMBL" id="CP002684">
    <property type="protein sequence ID" value="AEE30480.1"/>
    <property type="molecule type" value="Genomic_DNA"/>
</dbReference>
<dbReference type="EMBL" id="AY074564">
    <property type="protein sequence ID" value="AAL67104.1"/>
    <property type="molecule type" value="mRNA"/>
</dbReference>
<dbReference type="PIR" id="T00641">
    <property type="entry name" value="T00641"/>
</dbReference>
<dbReference type="RefSeq" id="NP_173822.2">
    <property type="nucleotide sequence ID" value="NM_102258.6"/>
</dbReference>
<dbReference type="SMR" id="Q8VXV4"/>
<dbReference type="BioGRID" id="24262">
    <property type="interactions" value="1"/>
</dbReference>
<dbReference type="FunCoup" id="Q8VXV4">
    <property type="interactions" value="670"/>
</dbReference>
<dbReference type="STRING" id="3702.Q8VXV4"/>
<dbReference type="PaxDb" id="3702-AT1G24120.1"/>
<dbReference type="ProteomicsDB" id="222081"/>
<dbReference type="EnsemblPlants" id="AT1G24120.1">
    <property type="protein sequence ID" value="AT1G24120.1"/>
    <property type="gene ID" value="AT1G24120"/>
</dbReference>
<dbReference type="GeneID" id="839024"/>
<dbReference type="Gramene" id="AT1G24120.1">
    <property type="protein sequence ID" value="AT1G24120.1"/>
    <property type="gene ID" value="AT1G24120"/>
</dbReference>
<dbReference type="KEGG" id="ath:AT1G24120"/>
<dbReference type="Araport" id="AT1G24120"/>
<dbReference type="TAIR" id="AT1G24120">
    <property type="gene designation" value="ARL1"/>
</dbReference>
<dbReference type="eggNOG" id="KOG0713">
    <property type="taxonomic scope" value="Eukaryota"/>
</dbReference>
<dbReference type="HOGENOM" id="CLU_031086_0_0_1"/>
<dbReference type="InParanoid" id="Q8VXV4"/>
<dbReference type="OMA" id="TCDKSET"/>
<dbReference type="PhylomeDB" id="Q8VXV4"/>
<dbReference type="PRO" id="PR:Q8VXV4"/>
<dbReference type="Proteomes" id="UP000006548">
    <property type="component" value="Chromosome 1"/>
</dbReference>
<dbReference type="ExpressionAtlas" id="Q8VXV4">
    <property type="expression patterns" value="baseline and differential"/>
</dbReference>
<dbReference type="GO" id="GO:0016020">
    <property type="term" value="C:membrane"/>
    <property type="evidence" value="ECO:0007669"/>
    <property type="project" value="UniProtKB-SubCell"/>
</dbReference>
<dbReference type="GO" id="GO:0009737">
    <property type="term" value="P:response to abscisic acid"/>
    <property type="evidence" value="ECO:0000315"/>
    <property type="project" value="TAIR"/>
</dbReference>
<dbReference type="CDD" id="cd06257">
    <property type="entry name" value="DnaJ"/>
    <property type="match status" value="1"/>
</dbReference>
<dbReference type="FunFam" id="1.10.287.110:FF:000097">
    <property type="entry name" value="Chaperone protein dnaJ 16"/>
    <property type="match status" value="1"/>
</dbReference>
<dbReference type="Gene3D" id="1.10.287.110">
    <property type="entry name" value="DnaJ domain"/>
    <property type="match status" value="1"/>
</dbReference>
<dbReference type="InterPro" id="IPR001623">
    <property type="entry name" value="DnaJ_domain"/>
</dbReference>
<dbReference type="InterPro" id="IPR018253">
    <property type="entry name" value="DnaJ_domain_CS"/>
</dbReference>
<dbReference type="InterPro" id="IPR036869">
    <property type="entry name" value="J_dom_sf"/>
</dbReference>
<dbReference type="InterPro" id="IPR052812">
    <property type="entry name" value="Plant_DnaJ_domain"/>
</dbReference>
<dbReference type="PANTHER" id="PTHR44272:SF2">
    <property type="entry name" value="CHAPERONE PROTEIN DNAJ 16"/>
    <property type="match status" value="1"/>
</dbReference>
<dbReference type="PANTHER" id="PTHR44272">
    <property type="entry name" value="DNAJ DOMAIN (PROKARYOTIC HEAT SHOCK PROTEIN)"/>
    <property type="match status" value="1"/>
</dbReference>
<dbReference type="Pfam" id="PF00226">
    <property type="entry name" value="DnaJ"/>
    <property type="match status" value="1"/>
</dbReference>
<dbReference type="PRINTS" id="PR00625">
    <property type="entry name" value="JDOMAIN"/>
</dbReference>
<dbReference type="SMART" id="SM00271">
    <property type="entry name" value="DnaJ"/>
    <property type="match status" value="1"/>
</dbReference>
<dbReference type="SUPFAM" id="SSF46565">
    <property type="entry name" value="Chaperone J-domain"/>
    <property type="match status" value="1"/>
</dbReference>
<dbReference type="PROSITE" id="PS00636">
    <property type="entry name" value="DNAJ_1"/>
    <property type="match status" value="1"/>
</dbReference>
<dbReference type="PROSITE" id="PS50076">
    <property type="entry name" value="DNAJ_2"/>
    <property type="match status" value="1"/>
</dbReference>